<sequence length="361" mass="39594">MSKSALDPVEFLKGALEIPSPSGKERAVAEYLAEGMQKLGLKGFVDEADNARGQVGEGPVQVVLLGHIDTVPGQIPVRLEGGRLFGRGAVDAKGPFVAMIFAAAGLSEEARRRLTVHLVGATEEEAPSSKGARFVAPRLKPHYAVIGEPSGWEGITLGYKGRLLVKARREKDHFHSAHHEPNAAEELISYFVAIKAWAEAMNVGQRPFDQVQYTLRDFRVHPAELRQVAEMFFDLRLPPRLPPEEAIRHLTAYAPPTIELEFFGREVPYQGPKDTPLTRAFRQAIRKAGGRPVFKLKTGTSDMNVLAPHWPVPMVAYGPGDSTLDHTPYEHVEVAEFLKGIEVLRGALEALAQTHAGEKEG</sequence>
<keyword id="KW-0028">Amino-acid biosynthesis</keyword>
<keyword id="KW-0170">Cobalt</keyword>
<keyword id="KW-0963">Cytoplasm</keyword>
<keyword id="KW-0378">Hydrolase</keyword>
<keyword id="KW-0457">Lysine biosynthesis</keyword>
<keyword id="KW-0479">Metal-binding</keyword>
<keyword id="KW-1185">Reference proteome</keyword>
<keyword id="KW-0862">Zinc</keyword>
<name>LYSK_THET8</name>
<organism>
    <name type="scientific">Thermus thermophilus (strain ATCC 27634 / DSM 579 / HB8)</name>
    <dbReference type="NCBI Taxonomy" id="300852"/>
    <lineage>
        <taxon>Bacteria</taxon>
        <taxon>Thermotogati</taxon>
        <taxon>Deinococcota</taxon>
        <taxon>Deinococci</taxon>
        <taxon>Thermales</taxon>
        <taxon>Thermaceae</taxon>
        <taxon>Thermus</taxon>
    </lineage>
</organism>
<comment type="function">
    <text evidence="1">Catalyzes the release of L-lysine from [LysW]-gamma-L-lysine.</text>
</comment>
<comment type="catalytic activity">
    <reaction evidence="1">
        <text>[amino-group carrier protein]-C-terminal-gamma-(L-lysyl)-L-glutamate + H2O = [amino-group carrier protein]-C-terminal-L-glutamate + L-lysine</text>
        <dbReference type="Rhea" id="RHEA:48684"/>
        <dbReference type="Rhea" id="RHEA-COMP:9693"/>
        <dbReference type="Rhea" id="RHEA-COMP:9715"/>
        <dbReference type="ChEBI" id="CHEBI:15377"/>
        <dbReference type="ChEBI" id="CHEBI:32551"/>
        <dbReference type="ChEBI" id="CHEBI:78525"/>
        <dbReference type="ChEBI" id="CHEBI:78526"/>
        <dbReference type="EC" id="3.5.1.130"/>
    </reaction>
</comment>
<comment type="cofactor">
    <cofactor evidence="1">
        <name>Zn(2+)</name>
        <dbReference type="ChEBI" id="CHEBI:29105"/>
    </cofactor>
    <cofactor evidence="1">
        <name>Co(2+)</name>
        <dbReference type="ChEBI" id="CHEBI:48828"/>
    </cofactor>
    <text evidence="1">Binds 2 Zn(2+) or Co(2+) ions per subunit.</text>
</comment>
<comment type="pathway">
    <text evidence="1">Amino-acid biosynthesis; L-lysine biosynthesis via AAA pathway; L-lysine from L-alpha-aminoadipate (Thermus route): step 5/5.</text>
</comment>
<comment type="subcellular location">
    <subcellularLocation>
        <location evidence="1">Cytoplasm</location>
    </subcellularLocation>
</comment>
<comment type="similarity">
    <text evidence="1">Belongs to the peptidase M20A family. LysK subfamily.</text>
</comment>
<accession>Q5SHH3</accession>
<reference key="1">
    <citation type="submission" date="2004-11" db="EMBL/GenBank/DDBJ databases">
        <title>Complete genome sequence of Thermus thermophilus HB8.</title>
        <authorList>
            <person name="Masui R."/>
            <person name="Kurokawa K."/>
            <person name="Nakagawa N."/>
            <person name="Tokunaga F."/>
            <person name="Koyama Y."/>
            <person name="Shibata T."/>
            <person name="Oshima T."/>
            <person name="Yokoyama S."/>
            <person name="Yasunaga T."/>
            <person name="Kuramitsu S."/>
        </authorList>
    </citation>
    <scope>NUCLEOTIDE SEQUENCE [LARGE SCALE GENOMIC DNA]</scope>
    <source>
        <strain>ATCC 27634 / DSM 579 / HB8</strain>
    </source>
</reference>
<evidence type="ECO:0000255" key="1">
    <source>
        <dbReference type="HAMAP-Rule" id="MF_01120"/>
    </source>
</evidence>
<feature type="chain" id="PRO_1000065261" description="[LysW]-lysine hydrolase">
    <location>
        <begin position="1"/>
        <end position="361"/>
    </location>
</feature>
<feature type="active site" evidence="1">
    <location>
        <position position="69"/>
    </location>
</feature>
<feature type="active site" description="Proton acceptor" evidence="1">
    <location>
        <position position="124"/>
    </location>
</feature>
<feature type="binding site" evidence="1">
    <location>
        <position position="67"/>
    </location>
    <ligand>
        <name>Zn(2+)</name>
        <dbReference type="ChEBI" id="CHEBI:29105"/>
        <label>1</label>
    </ligand>
</feature>
<feature type="binding site" evidence="1">
    <location>
        <position position="91"/>
    </location>
    <ligand>
        <name>Zn(2+)</name>
        <dbReference type="ChEBI" id="CHEBI:29105"/>
        <label>1</label>
    </ligand>
</feature>
<feature type="binding site" evidence="1">
    <location>
        <position position="91"/>
    </location>
    <ligand>
        <name>Zn(2+)</name>
        <dbReference type="ChEBI" id="CHEBI:29105"/>
        <label>2</label>
    </ligand>
</feature>
<feature type="binding site" evidence="1">
    <location>
        <position position="125"/>
    </location>
    <ligand>
        <name>Zn(2+)</name>
        <dbReference type="ChEBI" id="CHEBI:29105"/>
        <label>2</label>
    </ligand>
</feature>
<feature type="binding site" evidence="1">
    <location>
        <position position="148"/>
    </location>
    <ligand>
        <name>Zn(2+)</name>
        <dbReference type="ChEBI" id="CHEBI:29105"/>
        <label>1</label>
    </ligand>
</feature>
<feature type="binding site" evidence="1">
    <location>
        <position position="326"/>
    </location>
    <ligand>
        <name>Zn(2+)</name>
        <dbReference type="ChEBI" id="CHEBI:29105"/>
        <label>2</label>
    </ligand>
</feature>
<dbReference type="EC" id="3.5.1.130" evidence="1"/>
<dbReference type="EMBL" id="AP008226">
    <property type="protein sequence ID" value="BAD71580.1"/>
    <property type="molecule type" value="Genomic_DNA"/>
</dbReference>
<dbReference type="RefSeq" id="YP_145023.1">
    <property type="nucleotide sequence ID" value="NC_006461.1"/>
</dbReference>
<dbReference type="SMR" id="Q5SHH3"/>
<dbReference type="MEROPS" id="M20.022"/>
<dbReference type="EnsemblBacteria" id="BAD71580">
    <property type="protein sequence ID" value="BAD71580"/>
    <property type="gene ID" value="BAD71580"/>
</dbReference>
<dbReference type="KEGG" id="ttj:TTHA1757"/>
<dbReference type="PATRIC" id="fig|300852.9.peg.1728"/>
<dbReference type="eggNOG" id="COG0624">
    <property type="taxonomic scope" value="Bacteria"/>
</dbReference>
<dbReference type="HOGENOM" id="CLU_021802_2_0_0"/>
<dbReference type="PhylomeDB" id="Q5SHH3"/>
<dbReference type="SABIO-RK" id="Q5SHH3"/>
<dbReference type="UniPathway" id="UPA00033">
    <property type="reaction ID" value="UER00039"/>
</dbReference>
<dbReference type="Proteomes" id="UP000000532">
    <property type="component" value="Chromosome"/>
</dbReference>
<dbReference type="GO" id="GO:0005737">
    <property type="term" value="C:cytoplasm"/>
    <property type="evidence" value="ECO:0007669"/>
    <property type="project" value="UniProtKB-SubCell"/>
</dbReference>
<dbReference type="GO" id="GO:0050897">
    <property type="term" value="F:cobalt ion binding"/>
    <property type="evidence" value="ECO:0007669"/>
    <property type="project" value="UniProtKB-UniRule"/>
</dbReference>
<dbReference type="GO" id="GO:0016811">
    <property type="term" value="F:hydrolase activity, acting on carbon-nitrogen (but not peptide) bonds, in linear amides"/>
    <property type="evidence" value="ECO:0007669"/>
    <property type="project" value="UniProtKB-UniRule"/>
</dbReference>
<dbReference type="GO" id="GO:0008270">
    <property type="term" value="F:zinc ion binding"/>
    <property type="evidence" value="ECO:0007669"/>
    <property type="project" value="UniProtKB-UniRule"/>
</dbReference>
<dbReference type="GO" id="GO:0019878">
    <property type="term" value="P:lysine biosynthetic process via aminoadipic acid"/>
    <property type="evidence" value="ECO:0007669"/>
    <property type="project" value="UniProtKB-UniRule"/>
</dbReference>
<dbReference type="CDD" id="cd05653">
    <property type="entry name" value="M20_ArgE_LysK"/>
    <property type="match status" value="1"/>
</dbReference>
<dbReference type="Gene3D" id="3.40.630.10">
    <property type="entry name" value="Zn peptidases"/>
    <property type="match status" value="2"/>
</dbReference>
<dbReference type="HAMAP" id="MF_01120">
    <property type="entry name" value="LysK"/>
    <property type="match status" value="1"/>
</dbReference>
<dbReference type="InterPro" id="IPR010175">
    <property type="entry name" value="LysK"/>
</dbReference>
<dbReference type="InterPro" id="IPR002933">
    <property type="entry name" value="Peptidase_M20"/>
</dbReference>
<dbReference type="InterPro" id="IPR050072">
    <property type="entry name" value="Peptidase_M20A"/>
</dbReference>
<dbReference type="NCBIfam" id="TIGR01902">
    <property type="entry name" value="dapE-lys-deAc"/>
    <property type="match status" value="1"/>
</dbReference>
<dbReference type="NCBIfam" id="NF003367">
    <property type="entry name" value="PRK04443.1"/>
    <property type="match status" value="1"/>
</dbReference>
<dbReference type="PANTHER" id="PTHR43808:SF28">
    <property type="entry name" value="[LYSW]-LYSINE_[LYSW]-ORNITHINE HYDROLASE"/>
    <property type="match status" value="1"/>
</dbReference>
<dbReference type="PANTHER" id="PTHR43808">
    <property type="entry name" value="ACETYLORNITHINE DEACETYLASE"/>
    <property type="match status" value="1"/>
</dbReference>
<dbReference type="Pfam" id="PF01546">
    <property type="entry name" value="Peptidase_M20"/>
    <property type="match status" value="1"/>
</dbReference>
<dbReference type="SUPFAM" id="SSF53187">
    <property type="entry name" value="Zn-dependent exopeptidases"/>
    <property type="match status" value="1"/>
</dbReference>
<protein>
    <recommendedName>
        <fullName evidence="1">[LysW]-lysine hydrolase</fullName>
        <ecNumber evidence="1">3.5.1.130</ecNumber>
    </recommendedName>
</protein>
<proteinExistence type="inferred from homology"/>
<gene>
    <name evidence="1" type="primary">lysK</name>
    <name type="ordered locus">TTHA1757</name>
</gene>